<comment type="function">
    <text evidence="1">The glycine cleavage system catalyzes the degradation of glycine. The P protein binds the alpha-amino group of glycine through its pyridoxal phosphate cofactor; CO(2) is released and the remaining methylamine moiety is then transferred to the lipoamide cofactor of the H protein.</text>
</comment>
<comment type="catalytic activity">
    <reaction evidence="1">
        <text>N(6)-[(R)-lipoyl]-L-lysyl-[glycine-cleavage complex H protein] + glycine + H(+) = N(6)-[(R)-S(8)-aminomethyldihydrolipoyl]-L-lysyl-[glycine-cleavage complex H protein] + CO2</text>
        <dbReference type="Rhea" id="RHEA:24304"/>
        <dbReference type="Rhea" id="RHEA-COMP:10494"/>
        <dbReference type="Rhea" id="RHEA-COMP:10495"/>
        <dbReference type="ChEBI" id="CHEBI:15378"/>
        <dbReference type="ChEBI" id="CHEBI:16526"/>
        <dbReference type="ChEBI" id="CHEBI:57305"/>
        <dbReference type="ChEBI" id="CHEBI:83099"/>
        <dbReference type="ChEBI" id="CHEBI:83143"/>
        <dbReference type="EC" id="1.4.4.2"/>
    </reaction>
</comment>
<comment type="cofactor">
    <cofactor evidence="1">
        <name>pyridoxal 5'-phosphate</name>
        <dbReference type="ChEBI" id="CHEBI:597326"/>
    </cofactor>
</comment>
<comment type="subunit">
    <text evidence="1">The glycine cleavage system is composed of four proteins: P, T, L and H.</text>
</comment>
<comment type="similarity">
    <text evidence="1">Belongs to the GcvP family.</text>
</comment>
<proteinExistence type="inferred from homology"/>
<gene>
    <name evidence="1" type="primary">gcvP</name>
    <name type="ordered locus">Vapar_3301</name>
</gene>
<protein>
    <recommendedName>
        <fullName evidence="1">Glycine dehydrogenase (decarboxylating)</fullName>
        <ecNumber evidence="1">1.4.4.2</ecNumber>
    </recommendedName>
    <alternativeName>
        <fullName evidence="1">Glycine cleavage system P-protein</fullName>
    </alternativeName>
    <alternativeName>
        <fullName evidence="1">Glycine decarboxylase</fullName>
    </alternativeName>
    <alternativeName>
        <fullName evidence="1">Glycine dehydrogenase (aminomethyl-transferring)</fullName>
    </alternativeName>
</protein>
<keyword id="KW-0560">Oxidoreductase</keyword>
<keyword id="KW-0663">Pyridoxal phosphate</keyword>
<organism>
    <name type="scientific">Variovorax paradoxus (strain S110)</name>
    <dbReference type="NCBI Taxonomy" id="543728"/>
    <lineage>
        <taxon>Bacteria</taxon>
        <taxon>Pseudomonadati</taxon>
        <taxon>Pseudomonadota</taxon>
        <taxon>Betaproteobacteria</taxon>
        <taxon>Burkholderiales</taxon>
        <taxon>Comamonadaceae</taxon>
        <taxon>Variovorax</taxon>
    </lineage>
</organism>
<evidence type="ECO:0000255" key="1">
    <source>
        <dbReference type="HAMAP-Rule" id="MF_00711"/>
    </source>
</evidence>
<sequence length="968" mass="104204">MPIPALPSLQQLENAEEFLARHIGIDAADEARMLPVIGSETRAELIDGIVPAAIRRAKPMRLPAPATEADALAELKAIAAKNKVFRSFIGQGYYGTHTPGVILRNVLENPAWYTAYTPYQAEISQGRMEALLNFQTMVCDLTGMAIANASMLDEATAAAEAMTLAKRSVKSKSNVFLVSGDCHPQTIEVIKTRAAPLGIEVKVSTVSETLPHLMVSGEFFGVLAQYPATTGHVHDLRPLAGHAHQCDAAFCVAADLLALTLLAPPGEWDADIVCGTTQRFGMPMCNGGPHAAYLACRDEFKRSLPGRLVGVSVDTHGQPAYRLALQTREQHIRREKATSNICTAQVLPAVVASMYAVYHGPDGLTRIAQRVAALTAILAQGLAQMGREPVNGTAFDSLTIRTGDDTPKIIERAQAAGVNLRQRLQQHLGISLDETTTRADIETLWALFVPAGTPMPRFDDLANAVPRLPEDLRRTSAFLTHPVFNTHKSETAMLRYIRSLSDKDLALDRSMIPLGSCTMKLNATSEMIPITWPEFANIHPFAPAEQLVGYAQLDAQLRAWLCEATGYAGISLQPNAGSQGEYAGLLAIRSFHEANGQGHRNICLIPSSAHGTNPASAQMVGLQVVVTACDAQGNVDMDDLRRACEKHSDKLAAVMITYPSTHGVFETRVKELCELVHEHGGRVYVDGANMNALVGVAAPGEFGGDVSHLNLHKTFCIPHGGGGPGVGPVCVVEDLVPYLPGHATAGVASNGVGAVSAAPLGNAAVLPISWMYCRMMGAKGLQAATEIAILSANYISARLKDHYPTLYASPNGHVAHECILDLRPLKDSSGVTAEDVAKRLIDYGFHAPTLSFPVPGTLMVEPTESEPLAELDRFIDAMIAIRGEIRRVEEGVWPKDDNPLKHAPHTAASLMAAEWPHPYSRELGAFPLAELKLAKYWPPIGRVDNVYGDRNLFCSCVPVGDYKETEEA</sequence>
<feature type="chain" id="PRO_1000212658" description="Glycine dehydrogenase (decarboxylating)">
    <location>
        <begin position="1"/>
        <end position="968"/>
    </location>
</feature>
<feature type="modified residue" description="N6-(pyridoxal phosphate)lysine" evidence="1">
    <location>
        <position position="713"/>
    </location>
</feature>
<name>GCSP_VARPS</name>
<accession>C5CRW8</accession>
<reference key="1">
    <citation type="journal article" date="2011" name="J. Bacteriol.">
        <title>Complete genome sequence of the metabolically versatile plant growth-promoting endophyte, Variovorax paradoxus S110.</title>
        <authorList>
            <person name="Han J.I."/>
            <person name="Choi H.K."/>
            <person name="Lee S.W."/>
            <person name="Orwin P.M."/>
            <person name="Kim J."/>
            <person name="Laroe S.L."/>
            <person name="Kim T.G."/>
            <person name="O'Neil J."/>
            <person name="Leadbetter J.R."/>
            <person name="Lee S.Y."/>
            <person name="Hur C.G."/>
            <person name="Spain J.C."/>
            <person name="Ovchinnikova G."/>
            <person name="Goodwin L."/>
            <person name="Han C."/>
        </authorList>
    </citation>
    <scope>NUCLEOTIDE SEQUENCE [LARGE SCALE GENOMIC DNA]</scope>
    <source>
        <strain>S110</strain>
    </source>
</reference>
<dbReference type="EC" id="1.4.4.2" evidence="1"/>
<dbReference type="EMBL" id="CP001635">
    <property type="protein sequence ID" value="ACS19919.1"/>
    <property type="molecule type" value="Genomic_DNA"/>
</dbReference>
<dbReference type="SMR" id="C5CRW8"/>
<dbReference type="STRING" id="543728.Vapar_3301"/>
<dbReference type="KEGG" id="vap:Vapar_3301"/>
<dbReference type="eggNOG" id="COG0403">
    <property type="taxonomic scope" value="Bacteria"/>
</dbReference>
<dbReference type="eggNOG" id="COG1003">
    <property type="taxonomic scope" value="Bacteria"/>
</dbReference>
<dbReference type="HOGENOM" id="CLU_004620_3_2_4"/>
<dbReference type="OrthoDB" id="9801272at2"/>
<dbReference type="GO" id="GO:0005829">
    <property type="term" value="C:cytosol"/>
    <property type="evidence" value="ECO:0007669"/>
    <property type="project" value="TreeGrafter"/>
</dbReference>
<dbReference type="GO" id="GO:0005960">
    <property type="term" value="C:glycine cleavage complex"/>
    <property type="evidence" value="ECO:0007669"/>
    <property type="project" value="TreeGrafter"/>
</dbReference>
<dbReference type="GO" id="GO:0016594">
    <property type="term" value="F:glycine binding"/>
    <property type="evidence" value="ECO:0007669"/>
    <property type="project" value="TreeGrafter"/>
</dbReference>
<dbReference type="GO" id="GO:0004375">
    <property type="term" value="F:glycine dehydrogenase (decarboxylating) activity"/>
    <property type="evidence" value="ECO:0007669"/>
    <property type="project" value="UniProtKB-EC"/>
</dbReference>
<dbReference type="GO" id="GO:0030170">
    <property type="term" value="F:pyridoxal phosphate binding"/>
    <property type="evidence" value="ECO:0007669"/>
    <property type="project" value="TreeGrafter"/>
</dbReference>
<dbReference type="GO" id="GO:0019464">
    <property type="term" value="P:glycine decarboxylation via glycine cleavage system"/>
    <property type="evidence" value="ECO:0007669"/>
    <property type="project" value="UniProtKB-UniRule"/>
</dbReference>
<dbReference type="CDD" id="cd00613">
    <property type="entry name" value="GDC-P"/>
    <property type="match status" value="2"/>
</dbReference>
<dbReference type="FunFam" id="3.40.640.10:FF:000005">
    <property type="entry name" value="Glycine dehydrogenase (decarboxylating), mitochondrial"/>
    <property type="match status" value="1"/>
</dbReference>
<dbReference type="FunFam" id="3.90.1150.10:FF:000007">
    <property type="entry name" value="Glycine dehydrogenase (decarboxylating), mitochondrial"/>
    <property type="match status" value="1"/>
</dbReference>
<dbReference type="FunFam" id="3.40.640.10:FF:000007">
    <property type="entry name" value="glycine dehydrogenase (Decarboxylating), mitochondrial"/>
    <property type="match status" value="1"/>
</dbReference>
<dbReference type="Gene3D" id="3.90.1150.10">
    <property type="entry name" value="Aspartate Aminotransferase, domain 1"/>
    <property type="match status" value="2"/>
</dbReference>
<dbReference type="Gene3D" id="3.40.640.10">
    <property type="entry name" value="Type I PLP-dependent aspartate aminotransferase-like (Major domain)"/>
    <property type="match status" value="2"/>
</dbReference>
<dbReference type="HAMAP" id="MF_00711">
    <property type="entry name" value="GcvP"/>
    <property type="match status" value="1"/>
</dbReference>
<dbReference type="InterPro" id="IPR003437">
    <property type="entry name" value="GcvP"/>
</dbReference>
<dbReference type="InterPro" id="IPR049316">
    <property type="entry name" value="GDC-P_C"/>
</dbReference>
<dbReference type="InterPro" id="IPR049315">
    <property type="entry name" value="GDC-P_N"/>
</dbReference>
<dbReference type="InterPro" id="IPR020581">
    <property type="entry name" value="GDC_P"/>
</dbReference>
<dbReference type="InterPro" id="IPR015424">
    <property type="entry name" value="PyrdxlP-dep_Trfase"/>
</dbReference>
<dbReference type="InterPro" id="IPR015421">
    <property type="entry name" value="PyrdxlP-dep_Trfase_major"/>
</dbReference>
<dbReference type="InterPro" id="IPR015422">
    <property type="entry name" value="PyrdxlP-dep_Trfase_small"/>
</dbReference>
<dbReference type="NCBIfam" id="TIGR00461">
    <property type="entry name" value="gcvP"/>
    <property type="match status" value="1"/>
</dbReference>
<dbReference type="NCBIfam" id="NF001696">
    <property type="entry name" value="PRK00451.1"/>
    <property type="match status" value="1"/>
</dbReference>
<dbReference type="NCBIfam" id="NF003346">
    <property type="entry name" value="PRK04366.1"/>
    <property type="match status" value="1"/>
</dbReference>
<dbReference type="PANTHER" id="PTHR11773:SF1">
    <property type="entry name" value="GLYCINE DEHYDROGENASE (DECARBOXYLATING), MITOCHONDRIAL"/>
    <property type="match status" value="1"/>
</dbReference>
<dbReference type="PANTHER" id="PTHR11773">
    <property type="entry name" value="GLYCINE DEHYDROGENASE, DECARBOXYLATING"/>
    <property type="match status" value="1"/>
</dbReference>
<dbReference type="Pfam" id="PF21478">
    <property type="entry name" value="GcvP2_C"/>
    <property type="match status" value="1"/>
</dbReference>
<dbReference type="Pfam" id="PF02347">
    <property type="entry name" value="GDC-P"/>
    <property type="match status" value="2"/>
</dbReference>
<dbReference type="SUPFAM" id="SSF53383">
    <property type="entry name" value="PLP-dependent transferases"/>
    <property type="match status" value="2"/>
</dbReference>